<proteinExistence type="evidence at protein level"/>
<organism>
    <name type="scientific">Fulica atra</name>
    <name type="common">Common coot</name>
    <dbReference type="NCBI Taxonomy" id="9121"/>
    <lineage>
        <taxon>Eukaryota</taxon>
        <taxon>Metazoa</taxon>
        <taxon>Chordata</taxon>
        <taxon>Craniata</taxon>
        <taxon>Vertebrata</taxon>
        <taxon>Euteleostomi</taxon>
        <taxon>Archelosauria</taxon>
        <taxon>Archosauria</taxon>
        <taxon>Dinosauria</taxon>
        <taxon>Saurischia</taxon>
        <taxon>Theropoda</taxon>
        <taxon>Coelurosauria</taxon>
        <taxon>Aves</taxon>
        <taxon>Neognathae</taxon>
        <taxon>Neoaves</taxon>
        <taxon>Gruiformes</taxon>
        <taxon>Rallidae</taxon>
        <taxon>Fulica</taxon>
    </lineage>
</organism>
<sequence>TATVDCSGYPQPACSLEYVPFCGSDNKTYSNKCDFCNAVADSNGTLTLSHFGKC</sequence>
<feature type="chain" id="PRO_0000073113" description="Ovomucoid">
    <location>
        <begin position="1" status="less than"/>
        <end position="54" status="greater than"/>
    </location>
</feature>
<feature type="domain" description="Kazal-like" evidence="1">
    <location>
        <begin position="4"/>
        <end position="54"/>
    </location>
</feature>
<feature type="site" description="Reactive bond 3">
    <location>
        <begin position="16"/>
        <end position="17"/>
    </location>
</feature>
<feature type="glycosylation site" description="N-linked (GlcNAc...) asparagine">
    <location>
        <position position="43"/>
    </location>
</feature>
<feature type="disulfide bond">
    <location>
        <begin position="6"/>
        <end position="36"/>
    </location>
</feature>
<feature type="disulfide bond">
    <location>
        <begin position="14"/>
        <end position="33"/>
    </location>
</feature>
<feature type="disulfide bond">
    <location>
        <begin position="22"/>
        <end position="54"/>
    </location>
</feature>
<feature type="non-terminal residue">
    <location>
        <position position="1"/>
    </location>
</feature>
<feature type="non-terminal residue">
    <location>
        <position position="54"/>
    </location>
</feature>
<protein>
    <recommendedName>
        <fullName>Ovomucoid</fullName>
    </recommendedName>
</protein>
<evidence type="ECO:0000255" key="1">
    <source>
        <dbReference type="PROSITE-ProRule" id="PRU00798"/>
    </source>
</evidence>
<dbReference type="PIR" id="H31438">
    <property type="entry name" value="H31438"/>
</dbReference>
<dbReference type="SMR" id="P68378"/>
<dbReference type="GO" id="GO:0005576">
    <property type="term" value="C:extracellular region"/>
    <property type="evidence" value="ECO:0007669"/>
    <property type="project" value="UniProtKB-SubCell"/>
</dbReference>
<dbReference type="GO" id="GO:0004867">
    <property type="term" value="F:serine-type endopeptidase inhibitor activity"/>
    <property type="evidence" value="ECO:0007669"/>
    <property type="project" value="UniProtKB-KW"/>
</dbReference>
<dbReference type="CDD" id="cd00104">
    <property type="entry name" value="KAZAL_FS"/>
    <property type="match status" value="1"/>
</dbReference>
<dbReference type="FunFam" id="3.30.60.30:FF:000037">
    <property type="entry name" value="Ovomucoid"/>
    <property type="match status" value="1"/>
</dbReference>
<dbReference type="Gene3D" id="3.30.60.30">
    <property type="match status" value="1"/>
</dbReference>
<dbReference type="InterPro" id="IPR051597">
    <property type="entry name" value="Bifunctional_prot_inhibitor"/>
</dbReference>
<dbReference type="InterPro" id="IPR002350">
    <property type="entry name" value="Kazal_dom"/>
</dbReference>
<dbReference type="InterPro" id="IPR036058">
    <property type="entry name" value="Kazal_dom_sf"/>
</dbReference>
<dbReference type="InterPro" id="IPR001239">
    <property type="entry name" value="Prot_inh_Kazal-m"/>
</dbReference>
<dbReference type="PANTHER" id="PTHR47729:SF1">
    <property type="entry name" value="OVOMUCOID-LIKE-RELATED"/>
    <property type="match status" value="1"/>
</dbReference>
<dbReference type="PANTHER" id="PTHR47729">
    <property type="entry name" value="SERINE PEPTIDASE INHIBITOR, KAZAL TYPE 2, TANDEM DUPLICATE 1-RELATED"/>
    <property type="match status" value="1"/>
</dbReference>
<dbReference type="Pfam" id="PF00050">
    <property type="entry name" value="Kazal_1"/>
    <property type="match status" value="1"/>
</dbReference>
<dbReference type="PRINTS" id="PR00290">
    <property type="entry name" value="KAZALINHBTR"/>
</dbReference>
<dbReference type="SMART" id="SM00280">
    <property type="entry name" value="KAZAL"/>
    <property type="match status" value="1"/>
</dbReference>
<dbReference type="SUPFAM" id="SSF100895">
    <property type="entry name" value="Kazal-type serine protease inhibitors"/>
    <property type="match status" value="1"/>
</dbReference>
<dbReference type="PROSITE" id="PS00282">
    <property type="entry name" value="KAZAL_1"/>
    <property type="match status" value="1"/>
</dbReference>
<dbReference type="PROSITE" id="PS51465">
    <property type="entry name" value="KAZAL_2"/>
    <property type="match status" value="1"/>
</dbReference>
<comment type="subcellular location">
    <subcellularLocation>
        <location>Secreted</location>
    </subcellularLocation>
</comment>
<comment type="domain">
    <text>Avian ovomucoid consists of three homologous, tandem Kazal family inhibitory domains.</text>
</comment>
<accession>P68378</accession>
<accession>P05613</accession>
<reference key="1">
    <citation type="journal article" date="1987" name="Biochemistry">
        <title>Ovomucoid third domains from 100 avian species: isolation, sequences, and hypervariability of enzyme-inhibitor contact residues.</title>
        <authorList>
            <person name="Laskowski M. Jr."/>
            <person name="Kato I."/>
            <person name="Ardelt W."/>
            <person name="Cook J."/>
            <person name="Denton A."/>
            <person name="Empie M.W."/>
            <person name="Kohr W.J."/>
            <person name="Park S.J."/>
            <person name="Parks K."/>
            <person name="Schatzley B.L."/>
            <person name="Schoenberger O.L."/>
            <person name="Tashiro M."/>
            <person name="Vichot G."/>
            <person name="Whatley H.E."/>
            <person name="Wieczorek A."/>
            <person name="Wieczorek M."/>
        </authorList>
    </citation>
    <scope>PROTEIN SEQUENCE</scope>
</reference>
<name>IOVO_FULAT</name>
<keyword id="KW-0903">Direct protein sequencing</keyword>
<keyword id="KW-1015">Disulfide bond</keyword>
<keyword id="KW-0325">Glycoprotein</keyword>
<keyword id="KW-0646">Protease inhibitor</keyword>
<keyword id="KW-0677">Repeat</keyword>
<keyword id="KW-0964">Secreted</keyword>
<keyword id="KW-0722">Serine protease inhibitor</keyword>